<name>DNAA_TOLAT</name>
<reference key="1">
    <citation type="submission" date="2009-05" db="EMBL/GenBank/DDBJ databases">
        <title>Complete sequence of Tolumonas auensis DSM 9187.</title>
        <authorList>
            <consortium name="US DOE Joint Genome Institute"/>
            <person name="Lucas S."/>
            <person name="Copeland A."/>
            <person name="Lapidus A."/>
            <person name="Glavina del Rio T."/>
            <person name="Tice H."/>
            <person name="Bruce D."/>
            <person name="Goodwin L."/>
            <person name="Pitluck S."/>
            <person name="Chertkov O."/>
            <person name="Brettin T."/>
            <person name="Detter J.C."/>
            <person name="Han C."/>
            <person name="Larimer F."/>
            <person name="Land M."/>
            <person name="Hauser L."/>
            <person name="Kyrpides N."/>
            <person name="Mikhailova N."/>
            <person name="Spring S."/>
            <person name="Beller H."/>
        </authorList>
    </citation>
    <scope>NUCLEOTIDE SEQUENCE [LARGE SCALE GENOMIC DNA]</scope>
    <source>
        <strain>DSM 9187 / NBRC 110442 / TA 4</strain>
    </source>
</reference>
<sequence length="461" mass="52221">MTASLWQQCLTRLQEELPSGEFGLWIRPLQAEFGDRSLTLYAANRFILDWVRDKYLLRINSLFTEICGADAPTLHFAVGRRPTAATVQMNTAAAPVADVRIGPAITVPSWTSKQDAMPEINHKSNINETYTFENFVEGKSNQLALAAAHQVAENPGGAYNPLFLYGGTGLGKTHLLHAVGNGIRARKPNAKVIYMQSERFVQDMVKALQNNAIQEFQRYYRSVDALLIDDIQFFAKKERSQEEFFHTFNALLEGNQQIILTSDRYPKEIDGVEDRLKSRFGWGLTIAIEPPELETRVAILMRKAEENKIHLPHEVAFFIAKRLRSNVRELEGALNRVIANARFTGKPINIDFVREALRDMLALQEKLVTIENIQKTVAEYYKIKVADLLSKRRSRSVARPRQLAMALAKELTNHSLPEIGDAFGGRDHTTVLHACRKIAELREESNDIKEDYSNLIRTLSS</sequence>
<feature type="chain" id="PRO_1000205666" description="Chromosomal replication initiator protein DnaA">
    <location>
        <begin position="1"/>
        <end position="461"/>
    </location>
</feature>
<feature type="region of interest" description="Domain I, interacts with DnaA modulators" evidence="1">
    <location>
        <begin position="1"/>
        <end position="83"/>
    </location>
</feature>
<feature type="region of interest" description="Domain II" evidence="1">
    <location>
        <begin position="83"/>
        <end position="124"/>
    </location>
</feature>
<feature type="region of interest" description="Domain III, AAA+ region" evidence="1">
    <location>
        <begin position="125"/>
        <end position="341"/>
    </location>
</feature>
<feature type="region of interest" description="Domain IV, binds dsDNA" evidence="1">
    <location>
        <begin position="342"/>
        <end position="461"/>
    </location>
</feature>
<feature type="binding site" evidence="1">
    <location>
        <position position="169"/>
    </location>
    <ligand>
        <name>ATP</name>
        <dbReference type="ChEBI" id="CHEBI:30616"/>
    </ligand>
</feature>
<feature type="binding site" evidence="1">
    <location>
        <position position="171"/>
    </location>
    <ligand>
        <name>ATP</name>
        <dbReference type="ChEBI" id="CHEBI:30616"/>
    </ligand>
</feature>
<feature type="binding site" evidence="1">
    <location>
        <position position="172"/>
    </location>
    <ligand>
        <name>ATP</name>
        <dbReference type="ChEBI" id="CHEBI:30616"/>
    </ligand>
</feature>
<feature type="binding site" evidence="1">
    <location>
        <position position="173"/>
    </location>
    <ligand>
        <name>ATP</name>
        <dbReference type="ChEBI" id="CHEBI:30616"/>
    </ligand>
</feature>
<evidence type="ECO:0000255" key="1">
    <source>
        <dbReference type="HAMAP-Rule" id="MF_00377"/>
    </source>
</evidence>
<dbReference type="EMBL" id="CP001616">
    <property type="protein sequence ID" value="ACQ91631.1"/>
    <property type="molecule type" value="Genomic_DNA"/>
</dbReference>
<dbReference type="RefSeq" id="WP_012728231.1">
    <property type="nucleotide sequence ID" value="NC_012691.1"/>
</dbReference>
<dbReference type="SMR" id="C4L755"/>
<dbReference type="STRING" id="595494.Tola_0001"/>
<dbReference type="KEGG" id="tau:Tola_0001"/>
<dbReference type="eggNOG" id="COG0593">
    <property type="taxonomic scope" value="Bacteria"/>
</dbReference>
<dbReference type="HOGENOM" id="CLU_026910_0_1_6"/>
<dbReference type="OrthoDB" id="9807019at2"/>
<dbReference type="Proteomes" id="UP000009073">
    <property type="component" value="Chromosome"/>
</dbReference>
<dbReference type="GO" id="GO:0005737">
    <property type="term" value="C:cytoplasm"/>
    <property type="evidence" value="ECO:0007669"/>
    <property type="project" value="UniProtKB-SubCell"/>
</dbReference>
<dbReference type="GO" id="GO:0005886">
    <property type="term" value="C:plasma membrane"/>
    <property type="evidence" value="ECO:0007669"/>
    <property type="project" value="TreeGrafter"/>
</dbReference>
<dbReference type="GO" id="GO:0005524">
    <property type="term" value="F:ATP binding"/>
    <property type="evidence" value="ECO:0007669"/>
    <property type="project" value="UniProtKB-UniRule"/>
</dbReference>
<dbReference type="GO" id="GO:0016887">
    <property type="term" value="F:ATP hydrolysis activity"/>
    <property type="evidence" value="ECO:0007669"/>
    <property type="project" value="InterPro"/>
</dbReference>
<dbReference type="GO" id="GO:0003688">
    <property type="term" value="F:DNA replication origin binding"/>
    <property type="evidence" value="ECO:0007669"/>
    <property type="project" value="UniProtKB-UniRule"/>
</dbReference>
<dbReference type="GO" id="GO:0008289">
    <property type="term" value="F:lipid binding"/>
    <property type="evidence" value="ECO:0007669"/>
    <property type="project" value="UniProtKB-KW"/>
</dbReference>
<dbReference type="GO" id="GO:0006270">
    <property type="term" value="P:DNA replication initiation"/>
    <property type="evidence" value="ECO:0007669"/>
    <property type="project" value="UniProtKB-UniRule"/>
</dbReference>
<dbReference type="GO" id="GO:0006275">
    <property type="term" value="P:regulation of DNA replication"/>
    <property type="evidence" value="ECO:0007669"/>
    <property type="project" value="UniProtKB-UniRule"/>
</dbReference>
<dbReference type="CDD" id="cd00009">
    <property type="entry name" value="AAA"/>
    <property type="match status" value="1"/>
</dbReference>
<dbReference type="CDD" id="cd06571">
    <property type="entry name" value="Bac_DnaA_C"/>
    <property type="match status" value="1"/>
</dbReference>
<dbReference type="FunFam" id="1.10.1750.10:FF:000001">
    <property type="entry name" value="Chromosomal replication initiator protein DnaA"/>
    <property type="match status" value="1"/>
</dbReference>
<dbReference type="FunFam" id="1.10.8.60:FF:000003">
    <property type="entry name" value="Chromosomal replication initiator protein DnaA"/>
    <property type="match status" value="1"/>
</dbReference>
<dbReference type="FunFam" id="3.40.50.300:FF:000103">
    <property type="entry name" value="Chromosomal replication initiator protein DnaA"/>
    <property type="match status" value="1"/>
</dbReference>
<dbReference type="Gene3D" id="1.10.1750.10">
    <property type="match status" value="1"/>
</dbReference>
<dbReference type="Gene3D" id="1.10.8.60">
    <property type="match status" value="1"/>
</dbReference>
<dbReference type="Gene3D" id="3.30.300.180">
    <property type="match status" value="1"/>
</dbReference>
<dbReference type="Gene3D" id="3.40.50.300">
    <property type="entry name" value="P-loop containing nucleotide triphosphate hydrolases"/>
    <property type="match status" value="1"/>
</dbReference>
<dbReference type="HAMAP" id="MF_00377">
    <property type="entry name" value="DnaA_bact"/>
    <property type="match status" value="1"/>
</dbReference>
<dbReference type="InterPro" id="IPR003593">
    <property type="entry name" value="AAA+_ATPase"/>
</dbReference>
<dbReference type="InterPro" id="IPR001957">
    <property type="entry name" value="Chromosome_initiator_DnaA"/>
</dbReference>
<dbReference type="InterPro" id="IPR020591">
    <property type="entry name" value="Chromosome_initiator_DnaA-like"/>
</dbReference>
<dbReference type="InterPro" id="IPR018312">
    <property type="entry name" value="Chromosome_initiator_DnaA_CS"/>
</dbReference>
<dbReference type="InterPro" id="IPR013159">
    <property type="entry name" value="DnaA_C"/>
</dbReference>
<dbReference type="InterPro" id="IPR013317">
    <property type="entry name" value="DnaA_dom"/>
</dbReference>
<dbReference type="InterPro" id="IPR024633">
    <property type="entry name" value="DnaA_N_dom"/>
</dbReference>
<dbReference type="InterPro" id="IPR038454">
    <property type="entry name" value="DnaA_N_sf"/>
</dbReference>
<dbReference type="InterPro" id="IPR027417">
    <property type="entry name" value="P-loop_NTPase"/>
</dbReference>
<dbReference type="InterPro" id="IPR010921">
    <property type="entry name" value="Trp_repressor/repl_initiator"/>
</dbReference>
<dbReference type="NCBIfam" id="TIGR00362">
    <property type="entry name" value="DnaA"/>
    <property type="match status" value="1"/>
</dbReference>
<dbReference type="PANTHER" id="PTHR30050">
    <property type="entry name" value="CHROMOSOMAL REPLICATION INITIATOR PROTEIN DNAA"/>
    <property type="match status" value="1"/>
</dbReference>
<dbReference type="PANTHER" id="PTHR30050:SF2">
    <property type="entry name" value="CHROMOSOMAL REPLICATION INITIATOR PROTEIN DNAA"/>
    <property type="match status" value="1"/>
</dbReference>
<dbReference type="Pfam" id="PF00308">
    <property type="entry name" value="Bac_DnaA"/>
    <property type="match status" value="1"/>
</dbReference>
<dbReference type="Pfam" id="PF08299">
    <property type="entry name" value="Bac_DnaA_C"/>
    <property type="match status" value="1"/>
</dbReference>
<dbReference type="Pfam" id="PF11638">
    <property type="entry name" value="DnaA_N"/>
    <property type="match status" value="1"/>
</dbReference>
<dbReference type="PRINTS" id="PR00051">
    <property type="entry name" value="DNAA"/>
</dbReference>
<dbReference type="SMART" id="SM00382">
    <property type="entry name" value="AAA"/>
    <property type="match status" value="1"/>
</dbReference>
<dbReference type="SMART" id="SM00760">
    <property type="entry name" value="Bac_DnaA_C"/>
    <property type="match status" value="1"/>
</dbReference>
<dbReference type="SUPFAM" id="SSF52540">
    <property type="entry name" value="P-loop containing nucleoside triphosphate hydrolases"/>
    <property type="match status" value="1"/>
</dbReference>
<dbReference type="SUPFAM" id="SSF48295">
    <property type="entry name" value="TrpR-like"/>
    <property type="match status" value="1"/>
</dbReference>
<dbReference type="PROSITE" id="PS01008">
    <property type="entry name" value="DNAA"/>
    <property type="match status" value="1"/>
</dbReference>
<protein>
    <recommendedName>
        <fullName evidence="1">Chromosomal replication initiator protein DnaA</fullName>
    </recommendedName>
</protein>
<keyword id="KW-0067">ATP-binding</keyword>
<keyword id="KW-0963">Cytoplasm</keyword>
<keyword id="KW-0235">DNA replication</keyword>
<keyword id="KW-0238">DNA-binding</keyword>
<keyword id="KW-0446">Lipid-binding</keyword>
<keyword id="KW-0547">Nucleotide-binding</keyword>
<keyword id="KW-1185">Reference proteome</keyword>
<organism>
    <name type="scientific">Tolumonas auensis (strain DSM 9187 / NBRC 110442 / TA 4)</name>
    <dbReference type="NCBI Taxonomy" id="595494"/>
    <lineage>
        <taxon>Bacteria</taxon>
        <taxon>Pseudomonadati</taxon>
        <taxon>Pseudomonadota</taxon>
        <taxon>Gammaproteobacteria</taxon>
        <taxon>Aeromonadales</taxon>
        <taxon>Aeromonadaceae</taxon>
        <taxon>Tolumonas</taxon>
    </lineage>
</organism>
<gene>
    <name evidence="1" type="primary">dnaA</name>
    <name type="ordered locus">Tola_0001</name>
</gene>
<comment type="function">
    <text evidence="1">Plays an essential role in the initiation and regulation of chromosomal replication. ATP-DnaA binds to the origin of replication (oriC) to initiate formation of the DNA replication initiation complex once per cell cycle. Binds the DnaA box (a 9 base pair repeat at the origin) and separates the double-stranded (ds)DNA. Forms a right-handed helical filament on oriC DNA; dsDNA binds to the exterior of the filament while single-stranded (ss)DNA is stabiized in the filament's interior. The ATP-DnaA-oriC complex binds and stabilizes one strand of the AT-rich DNA unwinding element (DUE), permitting loading of DNA polymerase. After initiation quickly degrades to an ADP-DnaA complex that is not apt for DNA replication. Binds acidic phospholipids.</text>
</comment>
<comment type="subunit">
    <text evidence="1">Oligomerizes as a right-handed, spiral filament on DNA at oriC.</text>
</comment>
<comment type="subcellular location">
    <subcellularLocation>
        <location evidence="1">Cytoplasm</location>
    </subcellularLocation>
</comment>
<comment type="domain">
    <text evidence="1">Domain I is involved in oligomerization and binding regulators, domain II is flexibile and of varying length in different bacteria, domain III forms the AAA+ region, while domain IV binds dsDNA.</text>
</comment>
<comment type="similarity">
    <text evidence="1">Belongs to the DnaA family.</text>
</comment>
<accession>C4L755</accession>
<proteinExistence type="inferred from homology"/>